<comment type="function">
    <text evidence="1">Catalyzes the interconversion of methylthioribose-1-phosphate (MTR-1-P) into methylthioribulose-1-phosphate (MTRu-1-P).</text>
</comment>
<comment type="catalytic activity">
    <reaction evidence="1">
        <text>5-(methylsulfanyl)-alpha-D-ribose 1-phosphate = 5-(methylsulfanyl)-D-ribulose 1-phosphate</text>
        <dbReference type="Rhea" id="RHEA:19989"/>
        <dbReference type="ChEBI" id="CHEBI:58533"/>
        <dbReference type="ChEBI" id="CHEBI:58548"/>
        <dbReference type="EC" id="5.3.1.23"/>
    </reaction>
</comment>
<comment type="pathway">
    <text evidence="1">Amino-acid biosynthesis; L-methionine biosynthesis via salvage pathway; L-methionine from S-methyl-5-thio-alpha-D-ribose 1-phosphate: step 1/6.</text>
</comment>
<comment type="similarity">
    <text evidence="2">Belongs to the eIF-2B alpha/beta/delta subunits family. MtnA subfamily.</text>
</comment>
<protein>
    <recommendedName>
        <fullName evidence="1">Methylthioribose-1-phosphate isomerase</fullName>
        <shortName evidence="1">M1Pi</shortName>
        <shortName evidence="1">MTR-1-P isomerase</shortName>
        <ecNumber evidence="1">5.3.1.23</ecNumber>
    </recommendedName>
    <alternativeName>
        <fullName evidence="1">S-methyl-5-thioribose-1-phosphate isomerase</fullName>
    </alternativeName>
</protein>
<evidence type="ECO:0000255" key="1">
    <source>
        <dbReference type="HAMAP-Rule" id="MF_01678"/>
    </source>
</evidence>
<evidence type="ECO:0000305" key="2"/>
<feature type="chain" id="PRO_0000357180" description="Methylthioribose-1-phosphate isomerase">
    <location>
        <begin position="1"/>
        <end position="350"/>
    </location>
</feature>
<feature type="active site" description="Proton donor" evidence="1">
    <location>
        <position position="238"/>
    </location>
</feature>
<feature type="binding site" evidence="1">
    <location>
        <begin position="47"/>
        <end position="49"/>
    </location>
    <ligand>
        <name>substrate</name>
    </ligand>
</feature>
<feature type="binding site" evidence="1">
    <location>
        <position position="90"/>
    </location>
    <ligand>
        <name>substrate</name>
    </ligand>
</feature>
<feature type="binding site" evidence="1">
    <location>
        <position position="197"/>
    </location>
    <ligand>
        <name>substrate</name>
    </ligand>
</feature>
<feature type="binding site" evidence="1">
    <location>
        <begin position="248"/>
        <end position="249"/>
    </location>
    <ligand>
        <name>substrate</name>
    </ligand>
</feature>
<feature type="site" description="Transition state stabilizer" evidence="1">
    <location>
        <position position="158"/>
    </location>
</feature>
<organism>
    <name type="scientific">Nitratidesulfovibrio vulgaris (strain DP4)</name>
    <name type="common">Desulfovibrio vulgaris</name>
    <dbReference type="NCBI Taxonomy" id="391774"/>
    <lineage>
        <taxon>Bacteria</taxon>
        <taxon>Pseudomonadati</taxon>
        <taxon>Thermodesulfobacteriota</taxon>
        <taxon>Desulfovibrionia</taxon>
        <taxon>Desulfovibrionales</taxon>
        <taxon>Desulfovibrionaceae</taxon>
        <taxon>Nitratidesulfovibrio</taxon>
    </lineage>
</organism>
<sequence>MERHIRYDAASRSLILLDQRYLPTREEDFVCRNTDDIVTALQVMVVRGAPAIGVTAAWGCVLAAYETAESGMETWRPVLDGLIERIANARPTAVNLRWAVERMRAAWHSLGRADLATLITYWTNEAKRIHRDDIAINRRMGEHGAELIDDGDAVMTHCNAGALATAGYGTALGVIRGAVEAGKNITVIANETRPFLQGARLTAFELHEDGIPVTVACDNACGLLMKRGMVQKVVVGADRIAANGDAANKIGTYSVALLAREHGIPFYVAAPLSTIDRETPDGDHIPIENRTPTEVTHVGATQITPDGVPVFNFAFDVTPAHLIAGIVTEMGVLRAPYRESIAEAFRKAGL</sequence>
<dbReference type="EC" id="5.3.1.23" evidence="1"/>
<dbReference type="EMBL" id="CP000527">
    <property type="protein sequence ID" value="ABM29888.1"/>
    <property type="molecule type" value="Genomic_DNA"/>
</dbReference>
<dbReference type="RefSeq" id="WP_010937395.1">
    <property type="nucleotide sequence ID" value="NC_008751.1"/>
</dbReference>
<dbReference type="SMR" id="A1VHH2"/>
<dbReference type="KEGG" id="dvl:Dvul_2877"/>
<dbReference type="HOGENOM" id="CLU_016218_1_2_7"/>
<dbReference type="UniPathway" id="UPA00904">
    <property type="reaction ID" value="UER00874"/>
</dbReference>
<dbReference type="Proteomes" id="UP000009173">
    <property type="component" value="Chromosome"/>
</dbReference>
<dbReference type="GO" id="GO:0046523">
    <property type="term" value="F:S-methyl-5-thioribose-1-phosphate isomerase activity"/>
    <property type="evidence" value="ECO:0007669"/>
    <property type="project" value="UniProtKB-UniRule"/>
</dbReference>
<dbReference type="GO" id="GO:0019509">
    <property type="term" value="P:L-methionine salvage from methylthioadenosine"/>
    <property type="evidence" value="ECO:0007669"/>
    <property type="project" value="UniProtKB-UniRule"/>
</dbReference>
<dbReference type="FunFam" id="1.20.120.420:FF:000003">
    <property type="entry name" value="Methylthioribose-1-phosphate isomerase"/>
    <property type="match status" value="1"/>
</dbReference>
<dbReference type="FunFam" id="3.40.50.10470:FF:000006">
    <property type="entry name" value="Methylthioribose-1-phosphate isomerase"/>
    <property type="match status" value="1"/>
</dbReference>
<dbReference type="Gene3D" id="1.20.120.420">
    <property type="entry name" value="translation initiation factor eif-2b, domain 1"/>
    <property type="match status" value="1"/>
</dbReference>
<dbReference type="Gene3D" id="3.40.50.10470">
    <property type="entry name" value="Translation initiation factor eif-2b, domain 2"/>
    <property type="match status" value="1"/>
</dbReference>
<dbReference type="HAMAP" id="MF_01678">
    <property type="entry name" value="Salvage_MtnA"/>
    <property type="match status" value="1"/>
</dbReference>
<dbReference type="InterPro" id="IPR000649">
    <property type="entry name" value="IF-2B-related"/>
</dbReference>
<dbReference type="InterPro" id="IPR005251">
    <property type="entry name" value="IF-M1Pi"/>
</dbReference>
<dbReference type="InterPro" id="IPR042529">
    <property type="entry name" value="IF_2B-like_C"/>
</dbReference>
<dbReference type="InterPro" id="IPR011559">
    <property type="entry name" value="Initiation_fac_2B_a/b/d"/>
</dbReference>
<dbReference type="InterPro" id="IPR027363">
    <property type="entry name" value="M1Pi_N"/>
</dbReference>
<dbReference type="InterPro" id="IPR037171">
    <property type="entry name" value="NagB/RpiA_transferase-like"/>
</dbReference>
<dbReference type="NCBIfam" id="TIGR00524">
    <property type="entry name" value="eIF-2B_rel"/>
    <property type="match status" value="1"/>
</dbReference>
<dbReference type="NCBIfam" id="NF004326">
    <property type="entry name" value="PRK05720.1"/>
    <property type="match status" value="1"/>
</dbReference>
<dbReference type="NCBIfam" id="TIGR00512">
    <property type="entry name" value="salvage_mtnA"/>
    <property type="match status" value="1"/>
</dbReference>
<dbReference type="PANTHER" id="PTHR43475">
    <property type="entry name" value="METHYLTHIORIBOSE-1-PHOSPHATE ISOMERASE"/>
    <property type="match status" value="1"/>
</dbReference>
<dbReference type="PANTHER" id="PTHR43475:SF1">
    <property type="entry name" value="METHYLTHIORIBOSE-1-PHOSPHATE ISOMERASE"/>
    <property type="match status" value="1"/>
</dbReference>
<dbReference type="Pfam" id="PF01008">
    <property type="entry name" value="IF-2B"/>
    <property type="match status" value="1"/>
</dbReference>
<dbReference type="SUPFAM" id="SSF100950">
    <property type="entry name" value="NagB/RpiA/CoA transferase-like"/>
    <property type="match status" value="1"/>
</dbReference>
<keyword id="KW-0028">Amino-acid biosynthesis</keyword>
<keyword id="KW-0413">Isomerase</keyword>
<keyword id="KW-0486">Methionine biosynthesis</keyword>
<name>MTNA_NITV4</name>
<accession>A1VHH2</accession>
<reference key="1">
    <citation type="journal article" date="2009" name="Environ. Microbiol.">
        <title>Contribution of mobile genetic elements to Desulfovibrio vulgaris genome plasticity.</title>
        <authorList>
            <person name="Walker C.B."/>
            <person name="Stolyar S."/>
            <person name="Chivian D."/>
            <person name="Pinel N."/>
            <person name="Gabster J.A."/>
            <person name="Dehal P.S."/>
            <person name="He Z."/>
            <person name="Yang Z.K."/>
            <person name="Yen H.C."/>
            <person name="Zhou J."/>
            <person name="Wall J.D."/>
            <person name="Hazen T.C."/>
            <person name="Arkin A.P."/>
            <person name="Stahl D.A."/>
        </authorList>
    </citation>
    <scope>NUCLEOTIDE SEQUENCE [LARGE SCALE GENOMIC DNA]</scope>
    <source>
        <strain>DP4</strain>
    </source>
</reference>
<proteinExistence type="inferred from homology"/>
<gene>
    <name evidence="1" type="primary">mtnA</name>
    <name type="ordered locus">Dvul_2877</name>
</gene>